<geneLocation type="mitochondrion"/>
<keyword id="KW-0249">Electron transport</keyword>
<keyword id="KW-0349">Heme</keyword>
<keyword id="KW-0408">Iron</keyword>
<keyword id="KW-0472">Membrane</keyword>
<keyword id="KW-0479">Metal-binding</keyword>
<keyword id="KW-0496">Mitochondrion</keyword>
<keyword id="KW-0999">Mitochondrion inner membrane</keyword>
<keyword id="KW-0679">Respiratory chain</keyword>
<keyword id="KW-0812">Transmembrane</keyword>
<keyword id="KW-1133">Transmembrane helix</keyword>
<keyword id="KW-0813">Transport</keyword>
<keyword id="KW-0830">Ubiquinone</keyword>
<feature type="chain" id="PRO_0000060585" description="Cytochrome b">
    <location>
        <begin position="1"/>
        <end position="384"/>
    </location>
</feature>
<feature type="transmembrane region" description="Helical" evidence="2">
    <location>
        <begin position="33"/>
        <end position="53"/>
    </location>
</feature>
<feature type="transmembrane region" description="Helical" evidence="2">
    <location>
        <begin position="77"/>
        <end position="98"/>
    </location>
</feature>
<feature type="transmembrane region" description="Helical" evidence="2">
    <location>
        <begin position="113"/>
        <end position="133"/>
    </location>
</feature>
<feature type="transmembrane region" description="Helical" evidence="2">
    <location>
        <begin position="178"/>
        <end position="198"/>
    </location>
</feature>
<feature type="transmembrane region" description="Helical" evidence="2">
    <location>
        <begin position="226"/>
        <end position="246"/>
    </location>
</feature>
<feature type="transmembrane region" description="Helical" evidence="2">
    <location>
        <begin position="288"/>
        <end position="308"/>
    </location>
</feature>
<feature type="transmembrane region" description="Helical" evidence="2">
    <location>
        <begin position="320"/>
        <end position="340"/>
    </location>
</feature>
<feature type="transmembrane region" description="Helical" evidence="2">
    <location>
        <begin position="347"/>
        <end position="367"/>
    </location>
</feature>
<feature type="binding site" description="axial binding residue" evidence="2">
    <location>
        <position position="83"/>
    </location>
    <ligand>
        <name>heme b</name>
        <dbReference type="ChEBI" id="CHEBI:60344"/>
        <label>b562</label>
    </ligand>
    <ligandPart>
        <name>Fe</name>
        <dbReference type="ChEBI" id="CHEBI:18248"/>
    </ligandPart>
</feature>
<feature type="binding site" description="axial binding residue" evidence="2">
    <location>
        <position position="97"/>
    </location>
    <ligand>
        <name>heme b</name>
        <dbReference type="ChEBI" id="CHEBI:60344"/>
        <label>b566</label>
    </ligand>
    <ligandPart>
        <name>Fe</name>
        <dbReference type="ChEBI" id="CHEBI:18248"/>
    </ligandPart>
</feature>
<feature type="binding site" description="axial binding residue" evidence="2">
    <location>
        <position position="182"/>
    </location>
    <ligand>
        <name>heme b</name>
        <dbReference type="ChEBI" id="CHEBI:60344"/>
        <label>b562</label>
    </ligand>
    <ligandPart>
        <name>Fe</name>
        <dbReference type="ChEBI" id="CHEBI:18248"/>
    </ligandPart>
</feature>
<feature type="binding site" description="axial binding residue" evidence="2">
    <location>
        <position position="196"/>
    </location>
    <ligand>
        <name>heme b</name>
        <dbReference type="ChEBI" id="CHEBI:60344"/>
        <label>b566</label>
    </ligand>
    <ligandPart>
        <name>Fe</name>
        <dbReference type="ChEBI" id="CHEBI:18248"/>
    </ligandPart>
</feature>
<feature type="binding site" evidence="2">
    <location>
        <position position="201"/>
    </location>
    <ligand>
        <name>a ubiquinone</name>
        <dbReference type="ChEBI" id="CHEBI:16389"/>
    </ligand>
</feature>
<dbReference type="EMBL" id="AP004425">
    <property type="protein sequence ID" value="BAC23436.1"/>
    <property type="molecule type" value="Genomic_DNA"/>
</dbReference>
<dbReference type="RefSeq" id="NP_739879.1">
    <property type="nucleotide sequence ID" value="NC_004391.1"/>
</dbReference>
<dbReference type="SMR" id="Q8HLR2"/>
<dbReference type="GeneID" id="805535"/>
<dbReference type="CTD" id="4519"/>
<dbReference type="GO" id="GO:0005743">
    <property type="term" value="C:mitochondrial inner membrane"/>
    <property type="evidence" value="ECO:0007669"/>
    <property type="project" value="UniProtKB-SubCell"/>
</dbReference>
<dbReference type="GO" id="GO:0045275">
    <property type="term" value="C:respiratory chain complex III"/>
    <property type="evidence" value="ECO:0007669"/>
    <property type="project" value="InterPro"/>
</dbReference>
<dbReference type="GO" id="GO:0046872">
    <property type="term" value="F:metal ion binding"/>
    <property type="evidence" value="ECO:0007669"/>
    <property type="project" value="UniProtKB-KW"/>
</dbReference>
<dbReference type="GO" id="GO:0008121">
    <property type="term" value="F:ubiquinol-cytochrome-c reductase activity"/>
    <property type="evidence" value="ECO:0007669"/>
    <property type="project" value="InterPro"/>
</dbReference>
<dbReference type="GO" id="GO:0006122">
    <property type="term" value="P:mitochondrial electron transport, ubiquinol to cytochrome c"/>
    <property type="evidence" value="ECO:0007669"/>
    <property type="project" value="TreeGrafter"/>
</dbReference>
<dbReference type="CDD" id="cd00290">
    <property type="entry name" value="cytochrome_b_C"/>
    <property type="match status" value="1"/>
</dbReference>
<dbReference type="CDD" id="cd00284">
    <property type="entry name" value="Cytochrome_b_N"/>
    <property type="match status" value="1"/>
</dbReference>
<dbReference type="FunFam" id="1.20.810.10:FF:000002">
    <property type="entry name" value="Cytochrome b"/>
    <property type="match status" value="1"/>
</dbReference>
<dbReference type="Gene3D" id="1.20.810.10">
    <property type="entry name" value="Cytochrome Bc1 Complex, Chain C"/>
    <property type="match status" value="1"/>
</dbReference>
<dbReference type="InterPro" id="IPR005798">
    <property type="entry name" value="Cyt_b/b6_C"/>
</dbReference>
<dbReference type="InterPro" id="IPR036150">
    <property type="entry name" value="Cyt_b/b6_C_sf"/>
</dbReference>
<dbReference type="InterPro" id="IPR005797">
    <property type="entry name" value="Cyt_b/b6_N"/>
</dbReference>
<dbReference type="InterPro" id="IPR027387">
    <property type="entry name" value="Cytb/b6-like_sf"/>
</dbReference>
<dbReference type="InterPro" id="IPR030689">
    <property type="entry name" value="Cytochrome_b"/>
</dbReference>
<dbReference type="InterPro" id="IPR048260">
    <property type="entry name" value="Cytochrome_b_C_euk/bac"/>
</dbReference>
<dbReference type="InterPro" id="IPR048259">
    <property type="entry name" value="Cytochrome_b_N_euk/bac"/>
</dbReference>
<dbReference type="InterPro" id="IPR016174">
    <property type="entry name" value="Di-haem_cyt_TM"/>
</dbReference>
<dbReference type="PANTHER" id="PTHR19271">
    <property type="entry name" value="CYTOCHROME B"/>
    <property type="match status" value="1"/>
</dbReference>
<dbReference type="PANTHER" id="PTHR19271:SF16">
    <property type="entry name" value="CYTOCHROME B"/>
    <property type="match status" value="1"/>
</dbReference>
<dbReference type="Pfam" id="PF00032">
    <property type="entry name" value="Cytochrom_B_C"/>
    <property type="match status" value="1"/>
</dbReference>
<dbReference type="Pfam" id="PF00033">
    <property type="entry name" value="Cytochrome_B"/>
    <property type="match status" value="1"/>
</dbReference>
<dbReference type="PIRSF" id="PIRSF038885">
    <property type="entry name" value="COB"/>
    <property type="match status" value="1"/>
</dbReference>
<dbReference type="SUPFAM" id="SSF81648">
    <property type="entry name" value="a domain/subunit of cytochrome bc1 complex (Ubiquinol-cytochrome c reductase)"/>
    <property type="match status" value="1"/>
</dbReference>
<dbReference type="SUPFAM" id="SSF81342">
    <property type="entry name" value="Transmembrane di-heme cytochromes"/>
    <property type="match status" value="1"/>
</dbReference>
<dbReference type="PROSITE" id="PS51003">
    <property type="entry name" value="CYTB_CTER"/>
    <property type="match status" value="1"/>
</dbReference>
<dbReference type="PROSITE" id="PS51002">
    <property type="entry name" value="CYTB_NTER"/>
    <property type="match status" value="1"/>
</dbReference>
<protein>
    <recommendedName>
        <fullName>Cytochrome b</fullName>
    </recommendedName>
    <alternativeName>
        <fullName>Complex III subunit 3</fullName>
    </alternativeName>
    <alternativeName>
        <fullName>Complex III subunit III</fullName>
    </alternativeName>
    <alternativeName>
        <fullName>Cytochrome b-c1 complex subunit 3</fullName>
    </alternativeName>
    <alternativeName>
        <fullName>Ubiquinol-cytochrome-c reductase complex cytochrome b subunit</fullName>
    </alternativeName>
</protein>
<accession>Q8HLR2</accession>
<evidence type="ECO:0000250" key="1"/>
<evidence type="ECO:0000250" key="2">
    <source>
        <dbReference type="UniProtKB" id="P00157"/>
    </source>
</evidence>
<evidence type="ECO:0000255" key="3">
    <source>
        <dbReference type="PROSITE-ProRule" id="PRU00967"/>
    </source>
</evidence>
<evidence type="ECO:0000255" key="4">
    <source>
        <dbReference type="PROSITE-ProRule" id="PRU00968"/>
    </source>
</evidence>
<name>CYB_ANOCO</name>
<organism>
    <name type="scientific">Anoplogaster cornuta</name>
    <name type="common">Common fangtooth</name>
    <dbReference type="NCBI Taxonomy" id="88656"/>
    <lineage>
        <taxon>Eukaryota</taxon>
        <taxon>Metazoa</taxon>
        <taxon>Chordata</taxon>
        <taxon>Craniata</taxon>
        <taxon>Vertebrata</taxon>
        <taxon>Euteleostomi</taxon>
        <taxon>Actinopterygii</taxon>
        <taxon>Neopterygii</taxon>
        <taxon>Teleostei</taxon>
        <taxon>Neoteleostei</taxon>
        <taxon>Acanthomorphata</taxon>
        <taxon>Berycimorphaceae</taxon>
        <taxon>Trachichthyiformes</taxon>
        <taxon>Anoplogasteridae</taxon>
        <taxon>Anoplogaster</taxon>
    </lineage>
</organism>
<sequence>MASLRKTHPILKIVNDALIDLPAPSNISFWWNYGSLLFLCLIIQIATGLFLAMHYTSDITTAFSSVAHICRDVNYGWLIRNMHANGASFFFICLYLHIGRGLYYGSYLNKETWNVGVILFLLVMMTAFVGYVLPWGQMSFWGATVITNLLSAVPYVGNALVQWIWGGFSVDNATLTRFFAFHFLFPFVIAAAAVIHLLFLHETGSNNPAGVNSNADKISFHPYFSYKDLLGFALMLLALTSLALFTPNLLGDPDNFIPANPLVTPPHIKPEWYFLFAYAILRSIPNKLGGVLALLFSILVLMVVPILHTSVQRGLTFRPLSQMLFWTLVADVLILTWIGGMPVEHPFIIIGQVASVLYFMLFLVLMPLVSWLENKALRKPIELA</sequence>
<proteinExistence type="inferred from homology"/>
<comment type="function">
    <text evidence="2">Component of the ubiquinol-cytochrome c reductase complex (complex III or cytochrome b-c1 complex) that is part of the mitochondrial respiratory chain. The b-c1 complex mediates electron transfer from ubiquinol to cytochrome c. Contributes to the generation of a proton gradient across the mitochondrial membrane that is then used for ATP synthesis.</text>
</comment>
<comment type="cofactor">
    <cofactor evidence="2">
        <name>heme b</name>
        <dbReference type="ChEBI" id="CHEBI:60344"/>
    </cofactor>
    <text evidence="2">Binds 2 heme b groups non-covalently.</text>
</comment>
<comment type="subunit">
    <text evidence="2">The cytochrome bc1 complex contains 3 respiratory subunits (MT-CYB, CYC1 and UQCRFS1), 2 core proteins (UQCRC1 and UQCRC2) and probably 6 low-molecular weight proteins.</text>
</comment>
<comment type="subcellular location">
    <subcellularLocation>
        <location evidence="2">Mitochondrion inner membrane</location>
        <topology evidence="2">Multi-pass membrane protein</topology>
    </subcellularLocation>
</comment>
<comment type="miscellaneous">
    <text evidence="1">Heme 1 (or BL or b562) is low-potential and absorbs at about 562 nm, and heme 2 (or BH or b566) is high-potential and absorbs at about 566 nm.</text>
</comment>
<comment type="similarity">
    <text evidence="3 4">Belongs to the cytochrome b family.</text>
</comment>
<comment type="caution">
    <text evidence="2">The full-length protein contains only eight transmembrane helices, not nine as predicted by bioinformatics tools.</text>
</comment>
<gene>
    <name type="primary">mt-cyb</name>
    <name type="synonym">cob</name>
    <name type="synonym">cytb</name>
    <name type="synonym">mtcyb</name>
</gene>
<reference key="1">
    <citation type="journal article" date="2003" name="Mol. Phylogenet. Evol.">
        <title>Major patterns of higher teleostean phylogenies: a new perspective based on 100 complete mitochondrial DNA sequences.</title>
        <authorList>
            <person name="Miya M."/>
            <person name="Takeshima H."/>
            <person name="Endo H."/>
            <person name="Ishiguro N.B."/>
            <person name="Inoue J.G."/>
            <person name="Mukai T."/>
            <person name="Satoh T.P."/>
            <person name="Yamaguchi M."/>
            <person name="Kawaguchi A."/>
            <person name="Mabuchi K."/>
            <person name="Shirai S.M."/>
            <person name="Nishida M."/>
        </authorList>
    </citation>
    <scope>NUCLEOTIDE SEQUENCE [GENOMIC DNA]</scope>
</reference>